<organismHost>
    <name type="scientific">Homo sapiens</name>
    <name type="common">Human</name>
    <dbReference type="NCBI Taxonomy" id="9606"/>
</organismHost>
<organismHost>
    <name type="scientific">Mammalia</name>
    <dbReference type="NCBI Taxonomy" id="40674"/>
</organismHost>
<name>NCAP_RABVA</name>
<reference key="1">
    <citation type="journal article" date="1988" name="Biochimie">
        <title>Sequence of the 3386 3' nucleotides of the genome of the AVO1 strain rabies virus: structural similarities in the protein regions involved in transcription.</title>
        <authorList>
            <person name="Poch O."/>
            <person name="Tordo N."/>
            <person name="Keith G."/>
        </authorList>
    </citation>
    <scope>NUCLEOTIDE SEQUENCE [GENOMIC RNA]</scope>
    <source>
        <strain>Isolate AVO1</strain>
    </source>
</reference>
<reference key="2">
    <citation type="submission" date="2005-06" db="EMBL/GenBank/DDBJ databases">
        <title>Characterization of rabies virus vaccine strains.</title>
        <authorList>
            <person name="Stallkamp I."/>
            <person name="Lopez-Yomayuza C.C."/>
            <person name="Thiel H.-J."/>
        </authorList>
    </citation>
    <scope>NUCLEOTIDE SEQUENCE [GENOMIC RNA]</scope>
    <source>
        <strain>Isolate PM1503</strain>
    </source>
</reference>
<evidence type="ECO:0000250" key="1"/>
<evidence type="ECO:0000305" key="2"/>
<accession>P15197</accession>
<accession>Q4F903</accession>
<organism>
    <name type="scientific">Rabies virus (strain PM1503/AVO1)</name>
    <name type="common">RABV</name>
    <dbReference type="NCBI Taxonomy" id="11293"/>
    <lineage>
        <taxon>Viruses</taxon>
        <taxon>Riboviria</taxon>
        <taxon>Orthornavirae</taxon>
        <taxon>Negarnaviricota</taxon>
        <taxon>Haploviricotina</taxon>
        <taxon>Monjiviricetes</taxon>
        <taxon>Mononegavirales</taxon>
        <taxon>Rhabdoviridae</taxon>
        <taxon>Alpharhabdovirinae</taxon>
        <taxon>Lyssavirus</taxon>
        <taxon>Lyssavirus rabies</taxon>
    </lineage>
</organism>
<comment type="function">
    <text evidence="1">Encapsidates the genome in a ratio of one protein N per nine ribonucleotides, protecting it from nucleases. If expressed without protein P it binds non-specifically RNA and therefore can bind it's own mRNA. Interaction with protein P abolishes any non-specific RNA binding, and prevents phosphorylation. The soluble N-P complex encapsidates specifically the genomic RNA, with protein N protecting the genome like a pearl necklace. The encapsidated genomic RNA is termed the nucleocapsid (NC) and serves as template for viral transcription and replication. Protein N binds protein P in the NC through a different interaction, and can be phosphorylated. Subsequent viral replication is dependent on intracellular concentration of newly synthesized protein N. During replication, encapsidation by protein N is coupled to RNA synthesis and all replicative products are resistant to nucleases (By similarity).</text>
</comment>
<comment type="subunit">
    <text evidence="1">Homomultimerizes to form the nucleocapsid. Binds to viral genomic RNA. In nucleocapsid, binds protein P and thereby positions the polymerase on the template. Protein P acts as a chaperone on free protein N to prevent it from aggregation before encapsidating genomic RNA (By similarity).</text>
</comment>
<comment type="subcellular location">
    <subcellularLocation>
        <location>Virion</location>
    </subcellularLocation>
    <subcellularLocation>
        <location evidence="1">Host cytoplasm</location>
    </subcellularLocation>
</comment>
<comment type="PTM">
    <text evidence="1">Phosphorylated by host CK2. Unphosphorylated protein N seems to have a better affinity for leader viral promoter encapsidation. Phosphorylation of protein N in ribonucleocapsid may stabilize the interaction with protein P, thereby playing an important role in viral transcription/replication (By similarity).</text>
</comment>
<comment type="miscellaneous">
    <text evidence="1">Displays a superantigen activity in human and mouse, activating mostly V-beta-8 subtypes of T-cell receptor.</text>
</comment>
<comment type="similarity">
    <text evidence="2">Belongs to the lyssavirus nucleocapsid protein family.</text>
</comment>
<feature type="chain" id="PRO_0000222816" description="Nucleoprotein">
    <location>
        <begin position="1"/>
        <end position="450"/>
    </location>
</feature>
<feature type="modified residue" description="Phosphoserine; by host CK2" evidence="1">
    <location>
        <position position="389"/>
    </location>
</feature>
<feature type="sequence variant" description="In strain: Isolate AVO1.">
    <original>T</original>
    <variation>S</variation>
    <location>
        <position position="377"/>
    </location>
</feature>
<gene>
    <name type="primary">N</name>
</gene>
<proteinExistence type="inferred from homology"/>
<protein>
    <recommendedName>
        <fullName>Nucleoprotein</fullName>
        <shortName>NP</shortName>
    </recommendedName>
    <alternativeName>
        <fullName>Nucleocapsid protein</fullName>
        <shortName>Protein N</shortName>
    </alternativeName>
</protein>
<sequence length="450" mass="50748">MDADKIVFKVNNQVVSLKPEIIVDQYEYKYPAIKDLKKPCITLGKAPDLNKAYKSVLSGMNAAKLDPDDVCSYLAAAMQFFEGTCPEDWTSYGILIARKGDRITPNSLVEIKRTDVEGNWALTGGMELTRDPTVSEHASLVGLLLSLYRLSKISGQNTGNYKTNIADRIEQIFETAPFVKIVEHHTLMTTHKMCANWSTIPNFRFLAGTYDMFFSRIEHLYSAIRVGTVVTAYEDCSGLVSFTGFIKQINLTAREAILYFFHKNFEEEIRRMFEPGQETAVPHSYFIHFRSLGLSGKSPYSSNAVGHVFNLIHFVGCYMGQVRSLNATVIAACAPHEMSVLGGYLGEEFFGKGTFERRFFRDEKELQEYEAAELTKTDVALADDGTVNSDDEDYFSGETRSPEAVYTRIMMNGGRLKRSHIRRYVSVSSNHQARPNSFAEFLNKTYSNDS</sequence>
<dbReference type="EMBL" id="X13357">
    <property type="protein sequence ID" value="CAA31733.1"/>
    <property type="molecule type" value="Genomic_RNA"/>
</dbReference>
<dbReference type="EMBL" id="DQ099525">
    <property type="protein sequence ID" value="AAZ07891.1"/>
    <property type="molecule type" value="Genomic_RNA"/>
</dbReference>
<dbReference type="PIR" id="S07813">
    <property type="entry name" value="VHVNAV"/>
</dbReference>
<dbReference type="SMR" id="P15197"/>
<dbReference type="Proteomes" id="UP000008617">
    <property type="component" value="Genome"/>
</dbReference>
<dbReference type="GO" id="GO:0019029">
    <property type="term" value="C:helical viral capsid"/>
    <property type="evidence" value="ECO:0007669"/>
    <property type="project" value="UniProtKB-KW"/>
</dbReference>
<dbReference type="GO" id="GO:0030430">
    <property type="term" value="C:host cell cytoplasm"/>
    <property type="evidence" value="ECO:0007669"/>
    <property type="project" value="UniProtKB-SubCell"/>
</dbReference>
<dbReference type="GO" id="GO:1990904">
    <property type="term" value="C:ribonucleoprotein complex"/>
    <property type="evidence" value="ECO:0007669"/>
    <property type="project" value="UniProtKB-KW"/>
</dbReference>
<dbReference type="GO" id="GO:0019013">
    <property type="term" value="C:viral nucleocapsid"/>
    <property type="evidence" value="ECO:0007669"/>
    <property type="project" value="UniProtKB-KW"/>
</dbReference>
<dbReference type="GO" id="GO:0003723">
    <property type="term" value="F:RNA binding"/>
    <property type="evidence" value="ECO:0007669"/>
    <property type="project" value="UniProtKB-KW"/>
</dbReference>
<dbReference type="Gene3D" id="1.10.3610.10">
    <property type="entry name" value="Nucleoprotein"/>
    <property type="match status" value="1"/>
</dbReference>
<dbReference type="Gene3D" id="1.10.3570.10">
    <property type="entry name" value="Rhabdovirus nucleocapsid protein like domain"/>
    <property type="match status" value="1"/>
</dbReference>
<dbReference type="InterPro" id="IPR000448">
    <property type="entry name" value="Rhabdo_ncapsid"/>
</dbReference>
<dbReference type="InterPro" id="IPR023331">
    <property type="entry name" value="Rhabdovirus_ncapsid_C"/>
</dbReference>
<dbReference type="InterPro" id="IPR023330">
    <property type="entry name" value="Rhabdovirus_ncapsid_N"/>
</dbReference>
<dbReference type="InterPro" id="IPR035961">
    <property type="entry name" value="Rhabdovirus_nucleoprotein-like"/>
</dbReference>
<dbReference type="Pfam" id="PF00945">
    <property type="entry name" value="Rhabdo_ncap"/>
    <property type="match status" value="1"/>
</dbReference>
<dbReference type="SUPFAM" id="SSF140809">
    <property type="entry name" value="Rhabdovirus nucleoprotein-like"/>
    <property type="match status" value="1"/>
</dbReference>
<keyword id="KW-0167">Capsid protein</keyword>
<keyword id="KW-1139">Helical capsid protein</keyword>
<keyword id="KW-1035">Host cytoplasm</keyword>
<keyword id="KW-0597">Phosphoprotein</keyword>
<keyword id="KW-0687">Ribonucleoprotein</keyword>
<keyword id="KW-0694">RNA-binding</keyword>
<keyword id="KW-0766">Superantigen</keyword>
<keyword id="KW-0543">Viral nucleoprotein</keyword>
<keyword id="KW-0946">Virion</keyword>